<name>RNPH_AQUAE</name>
<feature type="chain" id="PRO_0000139861" description="Ribonuclease PH">
    <location>
        <begin position="1"/>
        <end position="255"/>
    </location>
</feature>
<feature type="binding site" evidence="1">
    <location>
        <position position="86"/>
    </location>
    <ligand>
        <name>phosphate</name>
        <dbReference type="ChEBI" id="CHEBI:43474"/>
        <note>substrate</note>
    </ligand>
</feature>
<feature type="binding site" evidence="1 2">
    <location>
        <begin position="124"/>
        <end position="126"/>
    </location>
    <ligand>
        <name>phosphate</name>
        <dbReference type="ChEBI" id="CHEBI:43474"/>
        <note>substrate</note>
    </ligand>
</feature>
<feature type="mutagenesis site" description="No processing of pre-tRNA-CCA-N(8), binds tRNA as well as wild-type." evidence="2">
    <original>R</original>
    <variation>A</variation>
    <location>
        <position position="86"/>
    </location>
</feature>
<feature type="mutagenesis site" description="Poor processing of pre-tRNA-CCA-N(8), removes a few nucleotides, binds tRNA better than wild-type." evidence="2">
    <original>T</original>
    <variation>A</variation>
    <location>
        <position position="125"/>
    </location>
</feature>
<feature type="mutagenesis site" description="Decreased processing of pre-tRNA-CCA-N(8), removes perhaps 4/8 nucleotides, binds tRNA slightly less well than wild-type." evidence="2">
    <original>R</original>
    <variation>A</variation>
    <location>
        <position position="126"/>
    </location>
</feature>
<feature type="strand" evidence="7">
    <location>
        <begin position="14"/>
        <end position="18"/>
    </location>
</feature>
<feature type="strand" evidence="7">
    <location>
        <begin position="21"/>
        <end position="32"/>
    </location>
</feature>
<feature type="strand" evidence="7">
    <location>
        <begin position="35"/>
        <end position="45"/>
    </location>
</feature>
<feature type="helix" evidence="7">
    <location>
        <begin position="49"/>
        <end position="51"/>
    </location>
</feature>
<feature type="strand" evidence="7">
    <location>
        <begin position="58"/>
        <end position="65"/>
    </location>
</feature>
<feature type="strand" evidence="9">
    <location>
        <begin position="67"/>
        <end position="69"/>
    </location>
</feature>
<feature type="turn" evidence="8">
    <location>
        <begin position="78"/>
        <end position="80"/>
    </location>
</feature>
<feature type="helix" evidence="7">
    <location>
        <begin position="85"/>
        <end position="101"/>
    </location>
</feature>
<feature type="helix" evidence="7">
    <location>
        <begin position="104"/>
        <end position="107"/>
    </location>
</feature>
<feature type="strand" evidence="7">
    <location>
        <begin position="111"/>
        <end position="120"/>
    </location>
</feature>
<feature type="helix" evidence="7">
    <location>
        <begin position="125"/>
        <end position="146"/>
    </location>
</feature>
<feature type="strand" evidence="7">
    <location>
        <begin position="149"/>
        <end position="152"/>
    </location>
</feature>
<feature type="strand" evidence="7">
    <location>
        <begin position="159"/>
        <end position="167"/>
    </location>
</feature>
<feature type="strand" evidence="7">
    <location>
        <begin position="170"/>
        <end position="174"/>
    </location>
</feature>
<feature type="helix" evidence="7">
    <location>
        <begin position="177"/>
        <end position="181"/>
    </location>
</feature>
<feature type="strand" evidence="7">
    <location>
        <begin position="184"/>
        <end position="192"/>
    </location>
</feature>
<feature type="strand" evidence="7">
    <location>
        <begin position="197"/>
        <end position="206"/>
    </location>
</feature>
<feature type="helix" evidence="7">
    <location>
        <begin position="211"/>
        <end position="233"/>
    </location>
</feature>
<feature type="strand" evidence="7">
    <location>
        <begin position="236"/>
        <end position="239"/>
    </location>
</feature>
<feature type="strand" evidence="7">
    <location>
        <begin position="242"/>
        <end position="245"/>
    </location>
</feature>
<feature type="strand" evidence="7">
    <location>
        <begin position="249"/>
        <end position="252"/>
    </location>
</feature>
<gene>
    <name evidence="1" type="primary">rph</name>
    <name type="synonym">rnpH</name>
    <name type="ordered locus">aq_924</name>
</gene>
<reference key="1">
    <citation type="journal article" date="1998" name="Nature">
        <title>The complete genome of the hyperthermophilic bacterium Aquifex aeolicus.</title>
        <authorList>
            <person name="Deckert G."/>
            <person name="Warren P.V."/>
            <person name="Gaasterland T."/>
            <person name="Young W.G."/>
            <person name="Lenox A.L."/>
            <person name="Graham D.E."/>
            <person name="Overbeek R."/>
            <person name="Snead M.A."/>
            <person name="Keller M."/>
            <person name="Aujay M."/>
            <person name="Huber R."/>
            <person name="Feldman R.A."/>
            <person name="Short J.M."/>
            <person name="Olsen G.J."/>
            <person name="Swanson R.V."/>
        </authorList>
    </citation>
    <scope>NUCLEOTIDE SEQUENCE [LARGE SCALE GENOMIC DNA]</scope>
    <source>
        <strain>VF5</strain>
    </source>
</reference>
<reference evidence="3 4 5 6" key="2">
    <citation type="journal article" date="2003" name="J. Biol. Chem.">
        <title>Crystal structure of the tRNA processing enzyme RNase PH from Aquifex aeolicus.</title>
        <authorList>
            <person name="Ishii R."/>
            <person name="Nureki O."/>
            <person name="Yokoyama S."/>
        </authorList>
    </citation>
    <scope>X-RAY CRYSTALLOGRAPHY (2.30 ANGSTROMS) OF WILD-TYPE AND 3 MUTANT PROTEINS WITH SUBSTRATE</scope>
    <scope>SUBUNIT</scope>
    <scope>MUTAGENESIS OF ARG-86; THR-125 AND ARG-126</scope>
</reference>
<keyword id="KW-0002">3D-structure</keyword>
<keyword id="KW-0548">Nucleotidyltransferase</keyword>
<keyword id="KW-1185">Reference proteome</keyword>
<keyword id="KW-0694">RNA-binding</keyword>
<keyword id="KW-0698">rRNA processing</keyword>
<keyword id="KW-0808">Transferase</keyword>
<keyword id="KW-0819">tRNA processing</keyword>
<keyword id="KW-0820">tRNA-binding</keyword>
<organism>
    <name type="scientific">Aquifex aeolicus (strain VF5)</name>
    <dbReference type="NCBI Taxonomy" id="224324"/>
    <lineage>
        <taxon>Bacteria</taxon>
        <taxon>Pseudomonadati</taxon>
        <taxon>Aquificota</taxon>
        <taxon>Aquificia</taxon>
        <taxon>Aquificales</taxon>
        <taxon>Aquificaceae</taxon>
        <taxon>Aquifex</taxon>
    </lineage>
</organism>
<comment type="function">
    <text evidence="1">Phosphorolytic 3'-5' exoribonuclease that plays an important role in tRNA 3'-end maturation. Removes nucleotide residues following the 3'-CCA terminus of tRNAs; can also add nucleotides to the ends of RNA molecules by using nucleoside diphosphates as substrates, but this may not be physiologically important. Probably plays a role in initiation of 16S rRNA degradation (leading to ribosome degradation) during starvation.</text>
</comment>
<comment type="catalytic activity">
    <reaction evidence="1">
        <text>tRNA(n+1) + phosphate = tRNA(n) + a ribonucleoside 5'-diphosphate</text>
        <dbReference type="Rhea" id="RHEA:10628"/>
        <dbReference type="Rhea" id="RHEA-COMP:17343"/>
        <dbReference type="Rhea" id="RHEA-COMP:17344"/>
        <dbReference type="ChEBI" id="CHEBI:43474"/>
        <dbReference type="ChEBI" id="CHEBI:57930"/>
        <dbReference type="ChEBI" id="CHEBI:173114"/>
        <dbReference type="EC" id="2.7.7.56"/>
    </reaction>
</comment>
<comment type="subunit">
    <text evidence="1 2">Homohexameric ring arranged as a trimer of dimers (PubMed:12746447).</text>
</comment>
<comment type="similarity">
    <text evidence="1">Belongs to the RNase PH family.</text>
</comment>
<proteinExistence type="evidence at protein level"/>
<dbReference type="EC" id="2.7.7.56" evidence="1"/>
<dbReference type="EMBL" id="AE000657">
    <property type="protein sequence ID" value="AAC07032.1"/>
    <property type="molecule type" value="Genomic_DNA"/>
</dbReference>
<dbReference type="PIR" id="B70380">
    <property type="entry name" value="B70380"/>
</dbReference>
<dbReference type="RefSeq" id="NP_213631.1">
    <property type="nucleotide sequence ID" value="NC_000918.1"/>
</dbReference>
<dbReference type="RefSeq" id="WP_010880569.1">
    <property type="nucleotide sequence ID" value="NC_000918.1"/>
</dbReference>
<dbReference type="PDB" id="1UDN">
    <property type="method" value="X-ray"/>
    <property type="resolution" value="2.30 A"/>
    <property type="chains" value="A=1-255"/>
</dbReference>
<dbReference type="PDB" id="1UDO">
    <property type="method" value="X-ray"/>
    <property type="resolution" value="2.30 A"/>
    <property type="chains" value="A=1-255"/>
</dbReference>
<dbReference type="PDB" id="1UDQ">
    <property type="method" value="X-ray"/>
    <property type="resolution" value="2.30 A"/>
    <property type="chains" value="A=1-255"/>
</dbReference>
<dbReference type="PDB" id="1UDS">
    <property type="method" value="X-ray"/>
    <property type="resolution" value="2.30 A"/>
    <property type="chains" value="A=1-255"/>
</dbReference>
<dbReference type="PDBsum" id="1UDN"/>
<dbReference type="PDBsum" id="1UDO"/>
<dbReference type="PDBsum" id="1UDQ"/>
<dbReference type="PDBsum" id="1UDS"/>
<dbReference type="SMR" id="O67069"/>
<dbReference type="FunCoup" id="O67069">
    <property type="interactions" value="381"/>
</dbReference>
<dbReference type="STRING" id="224324.aq_924"/>
<dbReference type="EnsemblBacteria" id="AAC07032">
    <property type="protein sequence ID" value="AAC07032"/>
    <property type="gene ID" value="aq_924"/>
</dbReference>
<dbReference type="KEGG" id="aae:aq_924"/>
<dbReference type="PATRIC" id="fig|224324.8.peg.724"/>
<dbReference type="eggNOG" id="COG0689">
    <property type="taxonomic scope" value="Bacteria"/>
</dbReference>
<dbReference type="HOGENOM" id="CLU_050858_0_0_0"/>
<dbReference type="InParanoid" id="O67069"/>
<dbReference type="OrthoDB" id="9807456at2"/>
<dbReference type="EvolutionaryTrace" id="O67069"/>
<dbReference type="Proteomes" id="UP000000798">
    <property type="component" value="Chromosome"/>
</dbReference>
<dbReference type="GO" id="GO:0000175">
    <property type="term" value="F:3'-5'-RNA exonuclease activity"/>
    <property type="evidence" value="ECO:0007669"/>
    <property type="project" value="UniProtKB-UniRule"/>
</dbReference>
<dbReference type="GO" id="GO:0003723">
    <property type="term" value="F:RNA binding"/>
    <property type="evidence" value="ECO:0000318"/>
    <property type="project" value="GO_Central"/>
</dbReference>
<dbReference type="GO" id="GO:0000049">
    <property type="term" value="F:tRNA binding"/>
    <property type="evidence" value="ECO:0007669"/>
    <property type="project" value="UniProtKB-UniRule"/>
</dbReference>
<dbReference type="GO" id="GO:0009022">
    <property type="term" value="F:tRNA nucleotidyltransferase activity"/>
    <property type="evidence" value="ECO:0007669"/>
    <property type="project" value="UniProtKB-UniRule"/>
</dbReference>
<dbReference type="GO" id="GO:0016075">
    <property type="term" value="P:rRNA catabolic process"/>
    <property type="evidence" value="ECO:0000318"/>
    <property type="project" value="GO_Central"/>
</dbReference>
<dbReference type="GO" id="GO:0006364">
    <property type="term" value="P:rRNA processing"/>
    <property type="evidence" value="ECO:0007669"/>
    <property type="project" value="UniProtKB-KW"/>
</dbReference>
<dbReference type="GO" id="GO:0008033">
    <property type="term" value="P:tRNA processing"/>
    <property type="evidence" value="ECO:0007669"/>
    <property type="project" value="UniProtKB-UniRule"/>
</dbReference>
<dbReference type="CDD" id="cd11362">
    <property type="entry name" value="RNase_PH_bact"/>
    <property type="match status" value="1"/>
</dbReference>
<dbReference type="FunFam" id="3.30.230.70:FF:000003">
    <property type="entry name" value="Ribonuclease PH"/>
    <property type="match status" value="1"/>
</dbReference>
<dbReference type="Gene3D" id="3.30.230.70">
    <property type="entry name" value="GHMP Kinase, N-terminal domain"/>
    <property type="match status" value="1"/>
</dbReference>
<dbReference type="HAMAP" id="MF_00564">
    <property type="entry name" value="RNase_PH"/>
    <property type="match status" value="1"/>
</dbReference>
<dbReference type="InterPro" id="IPR001247">
    <property type="entry name" value="ExoRNase_PH_dom1"/>
</dbReference>
<dbReference type="InterPro" id="IPR015847">
    <property type="entry name" value="ExoRNase_PH_dom2"/>
</dbReference>
<dbReference type="InterPro" id="IPR036345">
    <property type="entry name" value="ExoRNase_PH_dom2_sf"/>
</dbReference>
<dbReference type="InterPro" id="IPR027408">
    <property type="entry name" value="PNPase/RNase_PH_dom_sf"/>
</dbReference>
<dbReference type="InterPro" id="IPR020568">
    <property type="entry name" value="Ribosomal_Su5_D2-typ_SF"/>
</dbReference>
<dbReference type="InterPro" id="IPR050080">
    <property type="entry name" value="RNase_PH"/>
</dbReference>
<dbReference type="InterPro" id="IPR002381">
    <property type="entry name" value="RNase_PH_bac-type"/>
</dbReference>
<dbReference type="InterPro" id="IPR018336">
    <property type="entry name" value="RNase_PH_CS"/>
</dbReference>
<dbReference type="NCBIfam" id="TIGR01966">
    <property type="entry name" value="RNasePH"/>
    <property type="match status" value="1"/>
</dbReference>
<dbReference type="PANTHER" id="PTHR11953">
    <property type="entry name" value="EXOSOME COMPLEX COMPONENT"/>
    <property type="match status" value="1"/>
</dbReference>
<dbReference type="PANTHER" id="PTHR11953:SF0">
    <property type="entry name" value="EXOSOME COMPLEX COMPONENT RRP41"/>
    <property type="match status" value="1"/>
</dbReference>
<dbReference type="Pfam" id="PF01138">
    <property type="entry name" value="RNase_PH"/>
    <property type="match status" value="1"/>
</dbReference>
<dbReference type="Pfam" id="PF03725">
    <property type="entry name" value="RNase_PH_C"/>
    <property type="match status" value="1"/>
</dbReference>
<dbReference type="SUPFAM" id="SSF55666">
    <property type="entry name" value="Ribonuclease PH domain 2-like"/>
    <property type="match status" value="1"/>
</dbReference>
<dbReference type="SUPFAM" id="SSF54211">
    <property type="entry name" value="Ribosomal protein S5 domain 2-like"/>
    <property type="match status" value="1"/>
</dbReference>
<dbReference type="PROSITE" id="PS01277">
    <property type="entry name" value="RIBONUCLEASE_PH"/>
    <property type="match status" value="1"/>
</dbReference>
<sequence length="255" mass="28372">MRSDGRKEDQLRPVSIQRDFLEYPEGSCLISFGKTKVICTASVIENVPNWLKGKGQGWITAEYSMLPRATQQRTIRESVQGRIGGRTHEIQRMIGRAMRTAVELTKIGERTIWVDCDVIQADGGTRTAAITGAFVAVADAIIKLHKEGIIEETPIKDFVAAVSVGIVNDRILLDLNFEEDSAAQVDMNVVGTGSGRLSEVHTMGEEYSFTKDELIKMLDLAQKGINELIELQKKLYVIQDGKWERSELKEVSSTT</sequence>
<protein>
    <recommendedName>
        <fullName evidence="1">Ribonuclease PH</fullName>
        <shortName evidence="1">RNase PH</shortName>
        <ecNumber evidence="1">2.7.7.56</ecNumber>
    </recommendedName>
    <alternativeName>
        <fullName evidence="1">tRNA nucleotidyltransferase</fullName>
    </alternativeName>
</protein>
<accession>O67069</accession>
<evidence type="ECO:0000255" key="1">
    <source>
        <dbReference type="HAMAP-Rule" id="MF_00564"/>
    </source>
</evidence>
<evidence type="ECO:0000269" key="2">
    <source>
    </source>
</evidence>
<evidence type="ECO:0007744" key="3">
    <source>
        <dbReference type="PDB" id="1UDN"/>
    </source>
</evidence>
<evidence type="ECO:0007744" key="4">
    <source>
        <dbReference type="PDB" id="1UDO"/>
    </source>
</evidence>
<evidence type="ECO:0007744" key="5">
    <source>
        <dbReference type="PDB" id="1UDQ"/>
    </source>
</evidence>
<evidence type="ECO:0007744" key="6">
    <source>
        <dbReference type="PDB" id="1UDS"/>
    </source>
</evidence>
<evidence type="ECO:0007829" key="7">
    <source>
        <dbReference type="PDB" id="1UDN"/>
    </source>
</evidence>
<evidence type="ECO:0007829" key="8">
    <source>
        <dbReference type="PDB" id="1UDO"/>
    </source>
</evidence>
<evidence type="ECO:0007829" key="9">
    <source>
        <dbReference type="PDB" id="1UDS"/>
    </source>
</evidence>